<feature type="chain" id="PRO_0000189099" description="1-deoxy-D-xylulose-5-phosphate synthase">
    <location>
        <begin position="1"/>
        <end position="644"/>
    </location>
</feature>
<feature type="binding site" evidence="1">
    <location>
        <position position="78"/>
    </location>
    <ligand>
        <name>thiamine diphosphate</name>
        <dbReference type="ChEBI" id="CHEBI:58937"/>
    </ligand>
</feature>
<feature type="binding site" evidence="1">
    <location>
        <begin position="120"/>
        <end position="122"/>
    </location>
    <ligand>
        <name>thiamine diphosphate</name>
        <dbReference type="ChEBI" id="CHEBI:58937"/>
    </ligand>
</feature>
<feature type="binding site" evidence="1">
    <location>
        <position position="149"/>
    </location>
    <ligand>
        <name>Mg(2+)</name>
        <dbReference type="ChEBI" id="CHEBI:18420"/>
    </ligand>
</feature>
<feature type="binding site" evidence="1">
    <location>
        <begin position="150"/>
        <end position="151"/>
    </location>
    <ligand>
        <name>thiamine diphosphate</name>
        <dbReference type="ChEBI" id="CHEBI:58937"/>
    </ligand>
</feature>
<feature type="binding site" evidence="1">
    <location>
        <position position="178"/>
    </location>
    <ligand>
        <name>Mg(2+)</name>
        <dbReference type="ChEBI" id="CHEBI:18420"/>
    </ligand>
</feature>
<feature type="binding site" evidence="1">
    <location>
        <position position="178"/>
    </location>
    <ligand>
        <name>thiamine diphosphate</name>
        <dbReference type="ChEBI" id="CHEBI:58937"/>
    </ligand>
</feature>
<feature type="binding site" evidence="1">
    <location>
        <position position="373"/>
    </location>
    <ligand>
        <name>thiamine diphosphate</name>
        <dbReference type="ChEBI" id="CHEBI:58937"/>
    </ligand>
</feature>
<gene>
    <name evidence="1" type="primary">dxs</name>
    <name type="ordered locus">CCA_00304</name>
</gene>
<proteinExistence type="inferred from homology"/>
<name>DXS_CHLCV</name>
<reference key="1">
    <citation type="journal article" date="2003" name="Nucleic Acids Res.">
        <title>Genome sequence of Chlamydophila caviae (Chlamydia psittaci GPIC): examining the role of niche-specific genes in the evolution of the Chlamydiaceae.</title>
        <authorList>
            <person name="Read T.D."/>
            <person name="Myers G.S.A."/>
            <person name="Brunham R.C."/>
            <person name="Nelson W.C."/>
            <person name="Paulsen I.T."/>
            <person name="Heidelberg J.F."/>
            <person name="Holtzapple E.K."/>
            <person name="Khouri H.M."/>
            <person name="Federova N.B."/>
            <person name="Carty H.A."/>
            <person name="Umayam L.A."/>
            <person name="Haft D.H."/>
            <person name="Peterson J.D."/>
            <person name="Beanan M.J."/>
            <person name="White O."/>
            <person name="Salzberg S.L."/>
            <person name="Hsia R.-C."/>
            <person name="McClarty G."/>
            <person name="Rank R.G."/>
            <person name="Bavoil P.M."/>
            <person name="Fraser C.M."/>
        </authorList>
    </citation>
    <scope>NUCLEOTIDE SEQUENCE [LARGE SCALE GENOMIC DNA]</scope>
    <source>
        <strain>ATCC VR-813 / DSM 19441 / 03DC25 / GPIC</strain>
    </source>
</reference>
<organism>
    <name type="scientific">Chlamydia caviae (strain ATCC VR-813 / DSM 19441 / 03DC25 / GPIC)</name>
    <name type="common">Chlamydophila caviae</name>
    <dbReference type="NCBI Taxonomy" id="227941"/>
    <lineage>
        <taxon>Bacteria</taxon>
        <taxon>Pseudomonadati</taxon>
        <taxon>Chlamydiota</taxon>
        <taxon>Chlamydiia</taxon>
        <taxon>Chlamydiales</taxon>
        <taxon>Chlamydiaceae</taxon>
        <taxon>Chlamydia/Chlamydophila group</taxon>
        <taxon>Chlamydia</taxon>
    </lineage>
</organism>
<accession>Q823V1</accession>
<keyword id="KW-0414">Isoprene biosynthesis</keyword>
<keyword id="KW-0460">Magnesium</keyword>
<keyword id="KW-0479">Metal-binding</keyword>
<keyword id="KW-0784">Thiamine biosynthesis</keyword>
<keyword id="KW-0786">Thiamine pyrophosphate</keyword>
<keyword id="KW-0808">Transferase</keyword>
<evidence type="ECO:0000255" key="1">
    <source>
        <dbReference type="HAMAP-Rule" id="MF_00315"/>
    </source>
</evidence>
<sequence>MTSQVSSILSQISSPTDLKKFSLAELSLLAEQMRHKIISVLTNTGGHLASNLGIIELTIALHYVFSSTEDKFIFDVGHQAYPHKLLTGRNTEEFDRIRHDGGLSGFTSPSESIHDLFFSGHAGNALSLALGMAKATEDSRTHILPILGDAAFSCGLTLEALNNISSNLSKFIVVLNDNNMSISQNVGVMSKNLSRWIHHPKFNLFSRKIEKWLTKIPRYGNSISRRSHKLSICLKSLFCPIPIFEQFNLAYMGPVDGHDIKRLISVFQTARDLPFPVLIHVYTTKGKGLEIAQENPEKYHGVTANFNSSKENKFLPTIKPQLTYPDIFGQTVCTLGEAFPNLHIVTPAMSLGSRLEAFKEKFPNRFIDVGIAEGHAVTFSAGIAKAKSPVICSIYSTFLHRALDNVFHDVCLQGLPVILAIDRAGLAYGDGCSHHGIYDLSFLRAMPNMVICQPRSAVVFQQLLQSSLQWNMPVAIRYPNIAATQRDPIATDVHMHRDPGVGEILSQGEDVLILGLGHMCNTALSIKLQLLTHGISATVVDPVFVKPFDNNLFSILLMHHSKVIIIEEHSIRGGLASEFNDFLATYSFKVDVLHFGIPDAFFAHGDKESLLKRVGLDTESMVKRILTHFNFRTKTSPSNKLSIV</sequence>
<comment type="function">
    <text evidence="1">Catalyzes the acyloin condensation reaction between C atoms 2 and 3 of pyruvate and glyceraldehyde 3-phosphate to yield 1-deoxy-D-xylulose-5-phosphate (DXP).</text>
</comment>
<comment type="catalytic activity">
    <reaction evidence="1">
        <text>D-glyceraldehyde 3-phosphate + pyruvate + H(+) = 1-deoxy-D-xylulose 5-phosphate + CO2</text>
        <dbReference type="Rhea" id="RHEA:12605"/>
        <dbReference type="ChEBI" id="CHEBI:15361"/>
        <dbReference type="ChEBI" id="CHEBI:15378"/>
        <dbReference type="ChEBI" id="CHEBI:16526"/>
        <dbReference type="ChEBI" id="CHEBI:57792"/>
        <dbReference type="ChEBI" id="CHEBI:59776"/>
        <dbReference type="EC" id="2.2.1.7"/>
    </reaction>
</comment>
<comment type="cofactor">
    <cofactor evidence="1">
        <name>Mg(2+)</name>
        <dbReference type="ChEBI" id="CHEBI:18420"/>
    </cofactor>
    <text evidence="1">Binds 1 Mg(2+) ion per subunit.</text>
</comment>
<comment type="cofactor">
    <cofactor evidence="1">
        <name>thiamine diphosphate</name>
        <dbReference type="ChEBI" id="CHEBI:58937"/>
    </cofactor>
    <text evidence="1">Binds 1 thiamine pyrophosphate per subunit.</text>
</comment>
<comment type="pathway">
    <text evidence="1">Metabolic intermediate biosynthesis; 1-deoxy-D-xylulose 5-phosphate biosynthesis; 1-deoxy-D-xylulose 5-phosphate from D-glyceraldehyde 3-phosphate and pyruvate: step 1/1.</text>
</comment>
<comment type="subunit">
    <text evidence="1">Homodimer.</text>
</comment>
<comment type="similarity">
    <text evidence="1">Belongs to the transketolase family. DXPS subfamily.</text>
</comment>
<dbReference type="EC" id="2.2.1.7" evidence="1"/>
<dbReference type="EMBL" id="AE015925">
    <property type="protein sequence ID" value="AAP05053.1"/>
    <property type="molecule type" value="Genomic_DNA"/>
</dbReference>
<dbReference type="RefSeq" id="WP_011006271.1">
    <property type="nucleotide sequence ID" value="NC_003361.3"/>
</dbReference>
<dbReference type="SMR" id="Q823V1"/>
<dbReference type="STRING" id="227941.CCA_00304"/>
<dbReference type="KEGG" id="cca:CCA_00304"/>
<dbReference type="eggNOG" id="COG1154">
    <property type="taxonomic scope" value="Bacteria"/>
</dbReference>
<dbReference type="HOGENOM" id="CLU_009227_1_4_0"/>
<dbReference type="OrthoDB" id="9803371at2"/>
<dbReference type="UniPathway" id="UPA00064">
    <property type="reaction ID" value="UER00091"/>
</dbReference>
<dbReference type="Proteomes" id="UP000002193">
    <property type="component" value="Chromosome"/>
</dbReference>
<dbReference type="GO" id="GO:0005829">
    <property type="term" value="C:cytosol"/>
    <property type="evidence" value="ECO:0007669"/>
    <property type="project" value="TreeGrafter"/>
</dbReference>
<dbReference type="GO" id="GO:0008661">
    <property type="term" value="F:1-deoxy-D-xylulose-5-phosphate synthase activity"/>
    <property type="evidence" value="ECO:0007669"/>
    <property type="project" value="UniProtKB-UniRule"/>
</dbReference>
<dbReference type="GO" id="GO:0000287">
    <property type="term" value="F:magnesium ion binding"/>
    <property type="evidence" value="ECO:0007669"/>
    <property type="project" value="UniProtKB-UniRule"/>
</dbReference>
<dbReference type="GO" id="GO:0030976">
    <property type="term" value="F:thiamine pyrophosphate binding"/>
    <property type="evidence" value="ECO:0007669"/>
    <property type="project" value="UniProtKB-UniRule"/>
</dbReference>
<dbReference type="GO" id="GO:0052865">
    <property type="term" value="P:1-deoxy-D-xylulose 5-phosphate biosynthetic process"/>
    <property type="evidence" value="ECO:0007669"/>
    <property type="project" value="UniProtKB-UniPathway"/>
</dbReference>
<dbReference type="GO" id="GO:0019288">
    <property type="term" value="P:isopentenyl diphosphate biosynthetic process, methylerythritol 4-phosphate pathway"/>
    <property type="evidence" value="ECO:0007669"/>
    <property type="project" value="TreeGrafter"/>
</dbReference>
<dbReference type="GO" id="GO:0016114">
    <property type="term" value="P:terpenoid biosynthetic process"/>
    <property type="evidence" value="ECO:0007669"/>
    <property type="project" value="UniProtKB-UniRule"/>
</dbReference>
<dbReference type="GO" id="GO:0009228">
    <property type="term" value="P:thiamine biosynthetic process"/>
    <property type="evidence" value="ECO:0007669"/>
    <property type="project" value="UniProtKB-UniRule"/>
</dbReference>
<dbReference type="CDD" id="cd02007">
    <property type="entry name" value="TPP_DXS"/>
    <property type="match status" value="1"/>
</dbReference>
<dbReference type="CDD" id="cd07033">
    <property type="entry name" value="TPP_PYR_DXS_TK_like"/>
    <property type="match status" value="1"/>
</dbReference>
<dbReference type="Gene3D" id="3.40.50.920">
    <property type="match status" value="1"/>
</dbReference>
<dbReference type="Gene3D" id="3.40.50.970">
    <property type="match status" value="2"/>
</dbReference>
<dbReference type="HAMAP" id="MF_00315">
    <property type="entry name" value="DXP_synth"/>
    <property type="match status" value="1"/>
</dbReference>
<dbReference type="InterPro" id="IPR005477">
    <property type="entry name" value="Dxylulose-5-P_synthase"/>
</dbReference>
<dbReference type="InterPro" id="IPR029061">
    <property type="entry name" value="THDP-binding"/>
</dbReference>
<dbReference type="InterPro" id="IPR009014">
    <property type="entry name" value="Transketo_C/PFOR_II"/>
</dbReference>
<dbReference type="InterPro" id="IPR005475">
    <property type="entry name" value="Transketolase-like_Pyr-bd"/>
</dbReference>
<dbReference type="InterPro" id="IPR033248">
    <property type="entry name" value="Transketolase_C"/>
</dbReference>
<dbReference type="InterPro" id="IPR049557">
    <property type="entry name" value="Transketolase_CS"/>
</dbReference>
<dbReference type="NCBIfam" id="TIGR00204">
    <property type="entry name" value="dxs"/>
    <property type="match status" value="1"/>
</dbReference>
<dbReference type="NCBIfam" id="NF003933">
    <property type="entry name" value="PRK05444.2-2"/>
    <property type="match status" value="1"/>
</dbReference>
<dbReference type="PANTHER" id="PTHR43322">
    <property type="entry name" value="1-D-DEOXYXYLULOSE 5-PHOSPHATE SYNTHASE-RELATED"/>
    <property type="match status" value="1"/>
</dbReference>
<dbReference type="PANTHER" id="PTHR43322:SF5">
    <property type="entry name" value="1-DEOXY-D-XYLULOSE-5-PHOSPHATE SYNTHASE, CHLOROPLASTIC"/>
    <property type="match status" value="1"/>
</dbReference>
<dbReference type="Pfam" id="PF13292">
    <property type="entry name" value="DXP_synthase_N"/>
    <property type="match status" value="1"/>
</dbReference>
<dbReference type="Pfam" id="PF02779">
    <property type="entry name" value="Transket_pyr"/>
    <property type="match status" value="1"/>
</dbReference>
<dbReference type="Pfam" id="PF02780">
    <property type="entry name" value="Transketolase_C"/>
    <property type="match status" value="1"/>
</dbReference>
<dbReference type="SMART" id="SM00861">
    <property type="entry name" value="Transket_pyr"/>
    <property type="match status" value="1"/>
</dbReference>
<dbReference type="SUPFAM" id="SSF52518">
    <property type="entry name" value="Thiamin diphosphate-binding fold (THDP-binding)"/>
    <property type="match status" value="2"/>
</dbReference>
<dbReference type="SUPFAM" id="SSF52922">
    <property type="entry name" value="TK C-terminal domain-like"/>
    <property type="match status" value="1"/>
</dbReference>
<dbReference type="PROSITE" id="PS00801">
    <property type="entry name" value="TRANSKETOLASE_1"/>
    <property type="match status" value="1"/>
</dbReference>
<protein>
    <recommendedName>
        <fullName evidence="1">1-deoxy-D-xylulose-5-phosphate synthase</fullName>
        <ecNumber evidence="1">2.2.1.7</ecNumber>
    </recommendedName>
    <alternativeName>
        <fullName evidence="1">1-deoxyxylulose-5-phosphate synthase</fullName>
        <shortName evidence="1">DXP synthase</shortName>
        <shortName evidence="1">DXPS</shortName>
    </alternativeName>
</protein>